<reference key="1">
    <citation type="journal article" date="2000" name="Nature">
        <title>Complete DNA sequence of a serogroup A strain of Neisseria meningitidis Z2491.</title>
        <authorList>
            <person name="Parkhill J."/>
            <person name="Achtman M."/>
            <person name="James K.D."/>
            <person name="Bentley S.D."/>
            <person name="Churcher C.M."/>
            <person name="Klee S.R."/>
            <person name="Morelli G."/>
            <person name="Basham D."/>
            <person name="Brown D."/>
            <person name="Chillingworth T."/>
            <person name="Davies R.M."/>
            <person name="Davis P."/>
            <person name="Devlin K."/>
            <person name="Feltwell T."/>
            <person name="Hamlin N."/>
            <person name="Holroyd S."/>
            <person name="Jagels K."/>
            <person name="Leather S."/>
            <person name="Moule S."/>
            <person name="Mungall K.L."/>
            <person name="Quail M.A."/>
            <person name="Rajandream M.A."/>
            <person name="Rutherford K.M."/>
            <person name="Simmonds M."/>
            <person name="Skelton J."/>
            <person name="Whitehead S."/>
            <person name="Spratt B.G."/>
            <person name="Barrell B.G."/>
        </authorList>
    </citation>
    <scope>NUCLEOTIDE SEQUENCE [LARGE SCALE GENOMIC DNA]</scope>
    <source>
        <strain>DSM 15465 / Z2491</strain>
    </source>
</reference>
<gene>
    <name evidence="1" type="primary">gatB</name>
    <name type="ordered locus">NMA1570</name>
</gene>
<organism>
    <name type="scientific">Neisseria meningitidis serogroup A / serotype 4A (strain DSM 15465 / Z2491)</name>
    <dbReference type="NCBI Taxonomy" id="122587"/>
    <lineage>
        <taxon>Bacteria</taxon>
        <taxon>Pseudomonadati</taxon>
        <taxon>Pseudomonadota</taxon>
        <taxon>Betaproteobacteria</taxon>
        <taxon>Neisseriales</taxon>
        <taxon>Neisseriaceae</taxon>
        <taxon>Neisseria</taxon>
    </lineage>
</organism>
<dbReference type="EC" id="6.3.5.-" evidence="1"/>
<dbReference type="EMBL" id="AL157959">
    <property type="protein sequence ID" value="CAM08715.1"/>
    <property type="molecule type" value="Genomic_DNA"/>
</dbReference>
<dbReference type="PIR" id="E81849">
    <property type="entry name" value="E81849"/>
</dbReference>
<dbReference type="RefSeq" id="WP_002237080.1">
    <property type="nucleotide sequence ID" value="NC_003116.1"/>
</dbReference>
<dbReference type="SMR" id="Q9JTZ3"/>
<dbReference type="EnsemblBacteria" id="CAM08715">
    <property type="protein sequence ID" value="CAM08715"/>
    <property type="gene ID" value="NMA1570"/>
</dbReference>
<dbReference type="GeneID" id="93385843"/>
<dbReference type="KEGG" id="nma:NMA1570"/>
<dbReference type="HOGENOM" id="CLU_019240_0_0_4"/>
<dbReference type="Proteomes" id="UP000000626">
    <property type="component" value="Chromosome"/>
</dbReference>
<dbReference type="GO" id="GO:0050566">
    <property type="term" value="F:asparaginyl-tRNA synthase (glutamine-hydrolyzing) activity"/>
    <property type="evidence" value="ECO:0007669"/>
    <property type="project" value="RHEA"/>
</dbReference>
<dbReference type="GO" id="GO:0005524">
    <property type="term" value="F:ATP binding"/>
    <property type="evidence" value="ECO:0007669"/>
    <property type="project" value="UniProtKB-KW"/>
</dbReference>
<dbReference type="GO" id="GO:0050567">
    <property type="term" value="F:glutaminyl-tRNA synthase (glutamine-hydrolyzing) activity"/>
    <property type="evidence" value="ECO:0007669"/>
    <property type="project" value="UniProtKB-UniRule"/>
</dbReference>
<dbReference type="GO" id="GO:0070681">
    <property type="term" value="P:glutaminyl-tRNAGln biosynthesis via transamidation"/>
    <property type="evidence" value="ECO:0007669"/>
    <property type="project" value="TreeGrafter"/>
</dbReference>
<dbReference type="GO" id="GO:0006412">
    <property type="term" value="P:translation"/>
    <property type="evidence" value="ECO:0007669"/>
    <property type="project" value="UniProtKB-UniRule"/>
</dbReference>
<dbReference type="FunFam" id="1.10.10.410:FF:000001">
    <property type="entry name" value="Aspartyl/glutamyl-tRNA(Asn/Gln) amidotransferase subunit B"/>
    <property type="match status" value="1"/>
</dbReference>
<dbReference type="FunFam" id="1.10.150.380:FF:000001">
    <property type="entry name" value="Aspartyl/glutamyl-tRNA(Asn/Gln) amidotransferase subunit B"/>
    <property type="match status" value="1"/>
</dbReference>
<dbReference type="Gene3D" id="1.10.10.410">
    <property type="match status" value="1"/>
</dbReference>
<dbReference type="Gene3D" id="1.10.150.380">
    <property type="entry name" value="GatB domain, N-terminal subdomain"/>
    <property type="match status" value="1"/>
</dbReference>
<dbReference type="HAMAP" id="MF_00121">
    <property type="entry name" value="GatB"/>
    <property type="match status" value="1"/>
</dbReference>
<dbReference type="InterPro" id="IPR017959">
    <property type="entry name" value="Asn/Gln-tRNA_amidoTrfase_suB/E"/>
</dbReference>
<dbReference type="InterPro" id="IPR006075">
    <property type="entry name" value="Asn/Gln-tRNA_Trfase_suB/E_cat"/>
</dbReference>
<dbReference type="InterPro" id="IPR018027">
    <property type="entry name" value="Asn/Gln_amidotransferase"/>
</dbReference>
<dbReference type="InterPro" id="IPR003789">
    <property type="entry name" value="Asn/Gln_tRNA_amidoTrase-B-like"/>
</dbReference>
<dbReference type="InterPro" id="IPR004413">
    <property type="entry name" value="GatB"/>
</dbReference>
<dbReference type="InterPro" id="IPR042114">
    <property type="entry name" value="GatB_C_1"/>
</dbReference>
<dbReference type="InterPro" id="IPR023168">
    <property type="entry name" value="GatB_Yqey_C_2"/>
</dbReference>
<dbReference type="InterPro" id="IPR017958">
    <property type="entry name" value="Gln-tRNA_amidoTrfase_suB_CS"/>
</dbReference>
<dbReference type="InterPro" id="IPR014746">
    <property type="entry name" value="Gln_synth/guanido_kin_cat_dom"/>
</dbReference>
<dbReference type="NCBIfam" id="TIGR00133">
    <property type="entry name" value="gatB"/>
    <property type="match status" value="1"/>
</dbReference>
<dbReference type="NCBIfam" id="NF004012">
    <property type="entry name" value="PRK05477.1-2"/>
    <property type="match status" value="1"/>
</dbReference>
<dbReference type="NCBIfam" id="NF004014">
    <property type="entry name" value="PRK05477.1-4"/>
    <property type="match status" value="1"/>
</dbReference>
<dbReference type="NCBIfam" id="NF004015">
    <property type="entry name" value="PRK05477.1-5"/>
    <property type="match status" value="1"/>
</dbReference>
<dbReference type="PANTHER" id="PTHR11659">
    <property type="entry name" value="GLUTAMYL-TRNA GLN AMIDOTRANSFERASE SUBUNIT B MITOCHONDRIAL AND PROKARYOTIC PET112-RELATED"/>
    <property type="match status" value="1"/>
</dbReference>
<dbReference type="PANTHER" id="PTHR11659:SF0">
    <property type="entry name" value="GLUTAMYL-TRNA(GLN) AMIDOTRANSFERASE SUBUNIT B, MITOCHONDRIAL"/>
    <property type="match status" value="1"/>
</dbReference>
<dbReference type="Pfam" id="PF02934">
    <property type="entry name" value="GatB_N"/>
    <property type="match status" value="1"/>
</dbReference>
<dbReference type="Pfam" id="PF02637">
    <property type="entry name" value="GatB_Yqey"/>
    <property type="match status" value="1"/>
</dbReference>
<dbReference type="SMART" id="SM00845">
    <property type="entry name" value="GatB_Yqey"/>
    <property type="match status" value="1"/>
</dbReference>
<dbReference type="SUPFAM" id="SSF89095">
    <property type="entry name" value="GatB/YqeY motif"/>
    <property type="match status" value="1"/>
</dbReference>
<dbReference type="SUPFAM" id="SSF55931">
    <property type="entry name" value="Glutamine synthetase/guanido kinase"/>
    <property type="match status" value="1"/>
</dbReference>
<dbReference type="PROSITE" id="PS01234">
    <property type="entry name" value="GATB"/>
    <property type="match status" value="1"/>
</dbReference>
<keyword id="KW-0067">ATP-binding</keyword>
<keyword id="KW-0436">Ligase</keyword>
<keyword id="KW-0547">Nucleotide-binding</keyword>
<keyword id="KW-0648">Protein biosynthesis</keyword>
<accession>Q9JTZ3</accession>
<accession>A1ISF9</accession>
<sequence>MTWETVIGLEIHVQLNTKSKIFSGASTAFGAEPNAHAGVVECALPGVLPVMNREVVEKAIKLGLALDAKINRKNVFDRKNYFYPDLPKGYQISQLDLPIVEHGKLEIVVGDDVKTINVTRAHMEEDAGKSVHEGLNGATGIDLNRAGTPLLEVVSEPEMRSAAEAVAYAKALHSLVTWLNICDGNMAEGSFRVDANVSVRPKGQAEFGTRREIKNLNSFRFLEQAINYEAEAQIEILEDGGKVQQATMLFDPEKGETRVMRLKEDAHDYRYFPDPDLLPVIISDDRLQKAKAEMPELPKEMAARFVADYGVSDYDARLLTASRVQAAYFEEAAKESGQGKLTANWMNGELAATLNKEGMELADSPITAPRLAALVGKIADGTLSSKLAKKAFEAMWAEPEASIAEIIEKHGLQQMTDTGAIEAMVDEVLANNAKAVEQFKSGNEKALNAIVGQVMKASKGKANPAQVQELIKAKLA</sequence>
<proteinExistence type="inferred from homology"/>
<name>GATB_NEIMA</name>
<evidence type="ECO:0000255" key="1">
    <source>
        <dbReference type="HAMAP-Rule" id="MF_00121"/>
    </source>
</evidence>
<comment type="function">
    <text evidence="1">Allows the formation of correctly charged Asn-tRNA(Asn) or Gln-tRNA(Gln) through the transamidation of misacylated Asp-tRNA(Asn) or Glu-tRNA(Gln) in organisms which lack either or both of asparaginyl-tRNA or glutaminyl-tRNA synthetases. The reaction takes place in the presence of glutamine and ATP through an activated phospho-Asp-tRNA(Asn) or phospho-Glu-tRNA(Gln).</text>
</comment>
<comment type="catalytic activity">
    <reaction evidence="1">
        <text>L-glutamyl-tRNA(Gln) + L-glutamine + ATP + H2O = L-glutaminyl-tRNA(Gln) + L-glutamate + ADP + phosphate + H(+)</text>
        <dbReference type="Rhea" id="RHEA:17521"/>
        <dbReference type="Rhea" id="RHEA-COMP:9681"/>
        <dbReference type="Rhea" id="RHEA-COMP:9684"/>
        <dbReference type="ChEBI" id="CHEBI:15377"/>
        <dbReference type="ChEBI" id="CHEBI:15378"/>
        <dbReference type="ChEBI" id="CHEBI:29985"/>
        <dbReference type="ChEBI" id="CHEBI:30616"/>
        <dbReference type="ChEBI" id="CHEBI:43474"/>
        <dbReference type="ChEBI" id="CHEBI:58359"/>
        <dbReference type="ChEBI" id="CHEBI:78520"/>
        <dbReference type="ChEBI" id="CHEBI:78521"/>
        <dbReference type="ChEBI" id="CHEBI:456216"/>
    </reaction>
</comment>
<comment type="catalytic activity">
    <reaction evidence="1">
        <text>L-aspartyl-tRNA(Asn) + L-glutamine + ATP + H2O = L-asparaginyl-tRNA(Asn) + L-glutamate + ADP + phosphate + 2 H(+)</text>
        <dbReference type="Rhea" id="RHEA:14513"/>
        <dbReference type="Rhea" id="RHEA-COMP:9674"/>
        <dbReference type="Rhea" id="RHEA-COMP:9677"/>
        <dbReference type="ChEBI" id="CHEBI:15377"/>
        <dbReference type="ChEBI" id="CHEBI:15378"/>
        <dbReference type="ChEBI" id="CHEBI:29985"/>
        <dbReference type="ChEBI" id="CHEBI:30616"/>
        <dbReference type="ChEBI" id="CHEBI:43474"/>
        <dbReference type="ChEBI" id="CHEBI:58359"/>
        <dbReference type="ChEBI" id="CHEBI:78515"/>
        <dbReference type="ChEBI" id="CHEBI:78516"/>
        <dbReference type="ChEBI" id="CHEBI:456216"/>
    </reaction>
</comment>
<comment type="subunit">
    <text evidence="1">Heterotrimer of A, B and C subunits.</text>
</comment>
<comment type="similarity">
    <text evidence="1">Belongs to the GatB/GatE family. GatB subfamily.</text>
</comment>
<feature type="chain" id="PRO_0000148816" description="Aspartyl/glutamyl-tRNA(Asn/Gln) amidotransferase subunit B">
    <location>
        <begin position="1"/>
        <end position="476"/>
    </location>
</feature>
<protein>
    <recommendedName>
        <fullName evidence="1">Aspartyl/glutamyl-tRNA(Asn/Gln) amidotransferase subunit B</fullName>
        <shortName evidence="1">Asp/Glu-ADT subunit B</shortName>
        <ecNumber evidence="1">6.3.5.-</ecNumber>
    </recommendedName>
</protein>